<keyword id="KW-0175">Coiled coil</keyword>
<keyword id="KW-0963">Cytoplasm</keyword>
<keyword id="KW-1185">Reference proteome</keyword>
<keyword id="KW-0346">Stress response</keyword>
<reference key="1">
    <citation type="journal article" date="2005" name="Science">
        <title>The genome of the basidiomycetous yeast and human pathogen Cryptococcus neoformans.</title>
        <authorList>
            <person name="Loftus B.J."/>
            <person name="Fung E."/>
            <person name="Roncaglia P."/>
            <person name="Rowley D."/>
            <person name="Amedeo P."/>
            <person name="Bruno D."/>
            <person name="Vamathevan J."/>
            <person name="Miranda M."/>
            <person name="Anderson I.J."/>
            <person name="Fraser J.A."/>
            <person name="Allen J.E."/>
            <person name="Bosdet I.E."/>
            <person name="Brent M.R."/>
            <person name="Chiu R."/>
            <person name="Doering T.L."/>
            <person name="Donlin M.J."/>
            <person name="D'Souza C.A."/>
            <person name="Fox D.S."/>
            <person name="Grinberg V."/>
            <person name="Fu J."/>
            <person name="Fukushima M."/>
            <person name="Haas B.J."/>
            <person name="Huang J.C."/>
            <person name="Janbon G."/>
            <person name="Jones S.J.M."/>
            <person name="Koo H.L."/>
            <person name="Krzywinski M.I."/>
            <person name="Kwon-Chung K.J."/>
            <person name="Lengeler K.B."/>
            <person name="Maiti R."/>
            <person name="Marra M.A."/>
            <person name="Marra R.E."/>
            <person name="Mathewson C.A."/>
            <person name="Mitchell T.G."/>
            <person name="Pertea M."/>
            <person name="Riggs F.R."/>
            <person name="Salzberg S.L."/>
            <person name="Schein J.E."/>
            <person name="Shvartsbeyn A."/>
            <person name="Shin H."/>
            <person name="Shumway M."/>
            <person name="Specht C.A."/>
            <person name="Suh B.B."/>
            <person name="Tenney A."/>
            <person name="Utterback T.R."/>
            <person name="Wickes B.L."/>
            <person name="Wortman J.R."/>
            <person name="Wye N.H."/>
            <person name="Kronstad J.W."/>
            <person name="Lodge J.K."/>
            <person name="Heitman J."/>
            <person name="Davis R.W."/>
            <person name="Fraser C.M."/>
            <person name="Hyman R.W."/>
        </authorList>
    </citation>
    <scope>NUCLEOTIDE SEQUENCE [LARGE SCALE GENOMIC DNA]</scope>
    <source>
        <strain>JEC21 / ATCC MYA-565</strain>
    </source>
</reference>
<comment type="function">
    <text evidence="1">May act as a negative regulator of salt tolerance.</text>
</comment>
<comment type="subcellular location">
    <subcellularLocation>
        <location evidence="1">Cytoplasm</location>
    </subcellularLocation>
</comment>
<comment type="similarity">
    <text evidence="4">Belongs to the NST1 family.</text>
</comment>
<dbReference type="EMBL" id="AE017344">
    <property type="protein sequence ID" value="AAW43176.2"/>
    <property type="molecule type" value="Genomic_DNA"/>
</dbReference>
<dbReference type="RefSeq" id="XP_570483.1">
    <property type="nucleotide sequence ID" value="XM_570483.1"/>
</dbReference>
<dbReference type="SMR" id="P0CP34"/>
<dbReference type="PaxDb" id="214684-P0CP34"/>
<dbReference type="eggNOG" id="ENOG502QSSK">
    <property type="taxonomic scope" value="Eukaryota"/>
</dbReference>
<dbReference type="HOGENOM" id="CLU_002935_1_0_1"/>
<dbReference type="InParanoid" id="P0CP34"/>
<dbReference type="Proteomes" id="UP000002149">
    <property type="component" value="Chromosome 4"/>
</dbReference>
<dbReference type="GO" id="GO:0005737">
    <property type="term" value="C:cytoplasm"/>
    <property type="evidence" value="ECO:0007669"/>
    <property type="project" value="UniProtKB-SubCell"/>
</dbReference>
<dbReference type="InterPro" id="IPR025279">
    <property type="entry name" value="NST1"/>
</dbReference>
<dbReference type="PANTHER" id="PTHR45615">
    <property type="entry name" value="MYOSIN HEAVY CHAIN, NON-MUSCLE"/>
    <property type="match status" value="1"/>
</dbReference>
<dbReference type="PANTHER" id="PTHR45615:SF40">
    <property type="entry name" value="MYOSIN HEAVY CHAIN, NON-MUSCLE"/>
    <property type="match status" value="1"/>
</dbReference>
<dbReference type="Pfam" id="PF13945">
    <property type="entry name" value="NST1"/>
    <property type="match status" value="1"/>
</dbReference>
<evidence type="ECO:0000250" key="1"/>
<evidence type="ECO:0000255" key="2"/>
<evidence type="ECO:0000256" key="3">
    <source>
        <dbReference type="SAM" id="MobiDB-lite"/>
    </source>
</evidence>
<evidence type="ECO:0000305" key="4"/>
<feature type="chain" id="PRO_0000324448" description="Stress response protein NST1">
    <location>
        <begin position="1"/>
        <end position="1352"/>
    </location>
</feature>
<feature type="region of interest" description="Disordered" evidence="3">
    <location>
        <begin position="1"/>
        <end position="66"/>
    </location>
</feature>
<feature type="region of interest" description="Disordered" evidence="3">
    <location>
        <begin position="216"/>
        <end position="422"/>
    </location>
</feature>
<feature type="region of interest" description="Disordered" evidence="3">
    <location>
        <begin position="503"/>
        <end position="522"/>
    </location>
</feature>
<feature type="region of interest" description="Disordered" evidence="3">
    <location>
        <begin position="531"/>
        <end position="616"/>
    </location>
</feature>
<feature type="region of interest" description="Disordered" evidence="3">
    <location>
        <begin position="651"/>
        <end position="693"/>
    </location>
</feature>
<feature type="region of interest" description="Disordered" evidence="3">
    <location>
        <begin position="726"/>
        <end position="880"/>
    </location>
</feature>
<feature type="region of interest" description="Disordered" evidence="3">
    <location>
        <begin position="978"/>
        <end position="1118"/>
    </location>
</feature>
<feature type="region of interest" description="Disordered" evidence="3">
    <location>
        <begin position="1139"/>
        <end position="1275"/>
    </location>
</feature>
<feature type="region of interest" description="Disordered" evidence="3">
    <location>
        <begin position="1307"/>
        <end position="1336"/>
    </location>
</feature>
<feature type="coiled-coil region" evidence="2">
    <location>
        <begin position="712"/>
        <end position="943"/>
    </location>
</feature>
<feature type="compositionally biased region" description="Polar residues" evidence="3">
    <location>
        <begin position="1"/>
        <end position="12"/>
    </location>
</feature>
<feature type="compositionally biased region" description="Basic residues" evidence="3">
    <location>
        <begin position="16"/>
        <end position="25"/>
    </location>
</feature>
<feature type="compositionally biased region" description="Low complexity" evidence="3">
    <location>
        <begin position="26"/>
        <end position="45"/>
    </location>
</feature>
<feature type="compositionally biased region" description="Pro residues" evidence="3">
    <location>
        <begin position="46"/>
        <end position="59"/>
    </location>
</feature>
<feature type="compositionally biased region" description="Polar residues" evidence="3">
    <location>
        <begin position="218"/>
        <end position="229"/>
    </location>
</feature>
<feature type="compositionally biased region" description="Acidic residues" evidence="3">
    <location>
        <begin position="242"/>
        <end position="254"/>
    </location>
</feature>
<feature type="compositionally biased region" description="Basic residues" evidence="3">
    <location>
        <begin position="268"/>
        <end position="277"/>
    </location>
</feature>
<feature type="compositionally biased region" description="Pro residues" evidence="3">
    <location>
        <begin position="287"/>
        <end position="300"/>
    </location>
</feature>
<feature type="compositionally biased region" description="Low complexity" evidence="3">
    <location>
        <begin position="317"/>
        <end position="330"/>
    </location>
</feature>
<feature type="compositionally biased region" description="Pro residues" evidence="3">
    <location>
        <begin position="331"/>
        <end position="349"/>
    </location>
</feature>
<feature type="compositionally biased region" description="Low complexity" evidence="3">
    <location>
        <begin position="368"/>
        <end position="388"/>
    </location>
</feature>
<feature type="compositionally biased region" description="Basic and acidic residues" evidence="3">
    <location>
        <begin position="531"/>
        <end position="541"/>
    </location>
</feature>
<feature type="compositionally biased region" description="Acidic residues" evidence="3">
    <location>
        <begin position="542"/>
        <end position="583"/>
    </location>
</feature>
<feature type="compositionally biased region" description="Basic and acidic residues" evidence="3">
    <location>
        <begin position="653"/>
        <end position="664"/>
    </location>
</feature>
<feature type="compositionally biased region" description="Acidic residues" evidence="3">
    <location>
        <begin position="665"/>
        <end position="680"/>
    </location>
</feature>
<feature type="compositionally biased region" description="Basic and acidic residues" evidence="3">
    <location>
        <begin position="681"/>
        <end position="693"/>
    </location>
</feature>
<feature type="compositionally biased region" description="Basic and acidic residues" evidence="3">
    <location>
        <begin position="726"/>
        <end position="749"/>
    </location>
</feature>
<feature type="compositionally biased region" description="Basic and acidic residues" evidence="3">
    <location>
        <begin position="759"/>
        <end position="880"/>
    </location>
</feature>
<feature type="compositionally biased region" description="Polar residues" evidence="3">
    <location>
        <begin position="1008"/>
        <end position="1020"/>
    </location>
</feature>
<feature type="compositionally biased region" description="Pro residues" evidence="3">
    <location>
        <begin position="1153"/>
        <end position="1164"/>
    </location>
</feature>
<feature type="compositionally biased region" description="Polar residues" evidence="3">
    <location>
        <begin position="1173"/>
        <end position="1186"/>
    </location>
</feature>
<feature type="compositionally biased region" description="Polar residues" evidence="3">
    <location>
        <begin position="1208"/>
        <end position="1219"/>
    </location>
</feature>
<accession>P0CP34</accession>
<accession>Q55UG1</accession>
<accession>Q5KHY3</accession>
<protein>
    <recommendedName>
        <fullName>Stress response protein NST1</fullName>
    </recommendedName>
</protein>
<sequence length="1352" mass="146902">MSSKSQQPPTGLSKSAAKKRAKKAAKQSQNPQPQSAPQTSSQTPASVPPLPPASVPDPLDPAFFNFPGPGSYPIDVQYDDTAYYDQVDVPLNQGDFPGSYSIDYNLSLQNGSQLAGLSAPFNITHDDLISAANELYKRMADPEFGSDDAYWSSLPPHIRQFIRDAVPFTGSISQSTPGTTSSQRTMYQMAQQIVQAASQGMGLGHGMSANLMPGINANARSFPSPQQTIGEEFGFHRHPDTREEEYDDEEEIEEDQGHPAANGDAPKKKNKKKKKKGANAASLSAPVEPPAPLPPLPPPSTLSKIPRAPAPVPQPQLPTHQPQPLSQQPPSLNPLPPPAPASAPTPTPPSSRAAGKQPMGTNPPANPPARSARAAGKAPASAAPPHNAHAGHSHNHPSTAKPAPKGKSPATAPPAKIWTQSSAEDRENIRVFWLGLSEAERRDLLRIEKDAVLKKMKEQHRHSCGCAVCGRKKVNIEMELDQLYEQYYDELRSYAAEQRVAANGLRPPPSGAGPFPGSVEVDASGTVTQYDHRAPELHDHDPDDLDGEESEEYDDDDDYADDDELDDDDIGTDEADVGDEIDEPPPPPPITHRQQPRRPPVKAPPRSEGGDDFLSFGSNLATIKGILTIADDMLKNDGTKFLEMMEQLAIRRSVREEQNLRDMQEETDEEEEEEDDDESRDEPMTEKERAEEGKRMFQIFAARMFEQRVLQAYRERVAKQREEQLLRELEEEEDSKRAKEEKKAKEAQKKKDKKKAQKQKAEEERLAREAALEEEKRQAKLRKEEAERERMRRQDEERVRREAVKRAAQEEAQRQALERKRRQQEEKEREEEAAKKKREREEKAKKEREARENELKEKERKEREIKAAKEKAEKERIAKETLEKAERDRLAKEAKEKAEKIRQERLEASRMEKVRKEEAARKEREAVEQAKIIAAQQAQRERAAKAEKNTADKAAAERISAARVIPVAATAPVLATLGLKSPSKGSTPQSAPPVPQLSPVKGAARPITNATPGRSMQKTPTAYYPQPVPPVGVASFSRMPLAQSFGPPGLRPAYPTGSPAYSPPRANGSSISPNPPSRGFTDPSPPGFDHNLRTAPIGVGFPPVKPSGRIPSMADDAFSPTAPIGVPVTRSVSSAGEMGSLISGSVTPDDYRPTPPAPIAPPNLGPIGRPSFSDGQTSGPNVLRSTSPPPPDRVLGSAALGADDEIVQPQQRRPTTSWDMPTAAPGSGRWSASPSIWGSGDPTPAPSWGAPGSMPTVAERPGPPPGLSLSPGAGVNVLGQRQPSFGGIGSSFGGVGAVGSVIGGGMGGTAGSGLVQGHVGGGGYSQGLFSPQHQQQQQLQLQLQLQQQQQQQ</sequence>
<name>NST1_CRYNJ</name>
<gene>
    <name type="primary">NST1</name>
    <name type="ordered locus">CND04890</name>
</gene>
<organism>
    <name type="scientific">Cryptococcus neoformans var. neoformans serotype D (strain JEC21 / ATCC MYA-565)</name>
    <name type="common">Filobasidiella neoformans</name>
    <dbReference type="NCBI Taxonomy" id="214684"/>
    <lineage>
        <taxon>Eukaryota</taxon>
        <taxon>Fungi</taxon>
        <taxon>Dikarya</taxon>
        <taxon>Basidiomycota</taxon>
        <taxon>Agaricomycotina</taxon>
        <taxon>Tremellomycetes</taxon>
        <taxon>Tremellales</taxon>
        <taxon>Cryptococcaceae</taxon>
        <taxon>Cryptococcus</taxon>
        <taxon>Cryptococcus neoformans species complex</taxon>
    </lineage>
</organism>
<proteinExistence type="inferred from homology"/>